<keyword id="KW-0963">Cytoplasm</keyword>
<keyword id="KW-0227">DNA damage</keyword>
<keyword id="KW-0234">DNA repair</keyword>
<keyword id="KW-0235">DNA replication</keyword>
<keyword id="KW-0238">DNA-binding</keyword>
<keyword id="KW-0239">DNA-directed DNA polymerase</keyword>
<keyword id="KW-0460">Magnesium</keyword>
<keyword id="KW-0479">Metal-binding</keyword>
<keyword id="KW-0515">Mutator protein</keyword>
<keyword id="KW-0548">Nucleotidyltransferase</keyword>
<keyword id="KW-1185">Reference proteome</keyword>
<keyword id="KW-0808">Transferase</keyword>
<accession>Q6D1H8</accession>
<protein>
    <recommendedName>
        <fullName evidence="1">DNA polymerase IV</fullName>
        <shortName evidence="1">Pol IV</shortName>
        <ecNumber evidence="1">2.7.7.7</ecNumber>
    </recommendedName>
</protein>
<organism>
    <name type="scientific">Pectobacterium atrosepticum (strain SCRI 1043 / ATCC BAA-672)</name>
    <name type="common">Erwinia carotovora subsp. atroseptica</name>
    <dbReference type="NCBI Taxonomy" id="218491"/>
    <lineage>
        <taxon>Bacteria</taxon>
        <taxon>Pseudomonadati</taxon>
        <taxon>Pseudomonadota</taxon>
        <taxon>Gammaproteobacteria</taxon>
        <taxon>Enterobacterales</taxon>
        <taxon>Pectobacteriaceae</taxon>
        <taxon>Pectobacterium</taxon>
    </lineage>
</organism>
<dbReference type="EC" id="2.7.7.7" evidence="1"/>
<dbReference type="EMBL" id="BX950851">
    <property type="protein sequence ID" value="CAG76367.1"/>
    <property type="molecule type" value="Genomic_DNA"/>
</dbReference>
<dbReference type="RefSeq" id="WP_011094976.1">
    <property type="nucleotide sequence ID" value="NC_004547.2"/>
</dbReference>
<dbReference type="SMR" id="Q6D1H8"/>
<dbReference type="STRING" id="218491.ECA3468"/>
<dbReference type="GeneID" id="57210137"/>
<dbReference type="KEGG" id="eca:ECA3468"/>
<dbReference type="PATRIC" id="fig|218491.5.peg.3509"/>
<dbReference type="eggNOG" id="COG0389">
    <property type="taxonomic scope" value="Bacteria"/>
</dbReference>
<dbReference type="HOGENOM" id="CLU_012348_1_2_6"/>
<dbReference type="OrthoDB" id="9808813at2"/>
<dbReference type="Proteomes" id="UP000007966">
    <property type="component" value="Chromosome"/>
</dbReference>
<dbReference type="GO" id="GO:0005829">
    <property type="term" value="C:cytosol"/>
    <property type="evidence" value="ECO:0007669"/>
    <property type="project" value="TreeGrafter"/>
</dbReference>
<dbReference type="GO" id="GO:0003684">
    <property type="term" value="F:damaged DNA binding"/>
    <property type="evidence" value="ECO:0007669"/>
    <property type="project" value="InterPro"/>
</dbReference>
<dbReference type="GO" id="GO:0003887">
    <property type="term" value="F:DNA-directed DNA polymerase activity"/>
    <property type="evidence" value="ECO:0007669"/>
    <property type="project" value="UniProtKB-UniRule"/>
</dbReference>
<dbReference type="GO" id="GO:0000287">
    <property type="term" value="F:magnesium ion binding"/>
    <property type="evidence" value="ECO:0007669"/>
    <property type="project" value="UniProtKB-UniRule"/>
</dbReference>
<dbReference type="GO" id="GO:0006261">
    <property type="term" value="P:DNA-templated DNA replication"/>
    <property type="evidence" value="ECO:0007669"/>
    <property type="project" value="UniProtKB-UniRule"/>
</dbReference>
<dbReference type="GO" id="GO:0042276">
    <property type="term" value="P:error-prone translesion synthesis"/>
    <property type="evidence" value="ECO:0007669"/>
    <property type="project" value="TreeGrafter"/>
</dbReference>
<dbReference type="GO" id="GO:0009432">
    <property type="term" value="P:SOS response"/>
    <property type="evidence" value="ECO:0007669"/>
    <property type="project" value="TreeGrafter"/>
</dbReference>
<dbReference type="CDD" id="cd03586">
    <property type="entry name" value="PolY_Pol_IV_kappa"/>
    <property type="match status" value="1"/>
</dbReference>
<dbReference type="FunFam" id="1.10.150.20:FF:000019">
    <property type="entry name" value="DNA polymerase IV"/>
    <property type="match status" value="1"/>
</dbReference>
<dbReference type="FunFam" id="3.30.1490.100:FF:000002">
    <property type="entry name" value="DNA polymerase IV"/>
    <property type="match status" value="1"/>
</dbReference>
<dbReference type="FunFam" id="3.30.70.270:FF:000002">
    <property type="entry name" value="DNA polymerase IV"/>
    <property type="match status" value="1"/>
</dbReference>
<dbReference type="FunFam" id="3.40.1170.60:FF:000001">
    <property type="entry name" value="DNA polymerase IV"/>
    <property type="match status" value="1"/>
</dbReference>
<dbReference type="Gene3D" id="3.30.70.270">
    <property type="match status" value="1"/>
</dbReference>
<dbReference type="Gene3D" id="3.40.1170.60">
    <property type="match status" value="1"/>
</dbReference>
<dbReference type="Gene3D" id="1.10.150.20">
    <property type="entry name" value="5' to 3' exonuclease, C-terminal subdomain"/>
    <property type="match status" value="1"/>
</dbReference>
<dbReference type="Gene3D" id="3.30.1490.100">
    <property type="entry name" value="DNA polymerase, Y-family, little finger domain"/>
    <property type="match status" value="1"/>
</dbReference>
<dbReference type="HAMAP" id="MF_01113">
    <property type="entry name" value="DNApol_IV"/>
    <property type="match status" value="1"/>
</dbReference>
<dbReference type="InterPro" id="IPR043502">
    <property type="entry name" value="DNA/RNA_pol_sf"/>
</dbReference>
<dbReference type="InterPro" id="IPR036775">
    <property type="entry name" value="DNA_pol_Y-fam_lit_finger_sf"/>
</dbReference>
<dbReference type="InterPro" id="IPR017961">
    <property type="entry name" value="DNA_pol_Y-fam_little_finger"/>
</dbReference>
<dbReference type="InterPro" id="IPR050116">
    <property type="entry name" value="DNA_polymerase-Y"/>
</dbReference>
<dbReference type="InterPro" id="IPR022880">
    <property type="entry name" value="DNApol_IV"/>
</dbReference>
<dbReference type="InterPro" id="IPR053848">
    <property type="entry name" value="IMS_HHH_1"/>
</dbReference>
<dbReference type="InterPro" id="IPR043128">
    <property type="entry name" value="Rev_trsase/Diguanyl_cyclase"/>
</dbReference>
<dbReference type="InterPro" id="IPR001126">
    <property type="entry name" value="UmuC"/>
</dbReference>
<dbReference type="NCBIfam" id="NF002677">
    <property type="entry name" value="PRK02406.1"/>
    <property type="match status" value="1"/>
</dbReference>
<dbReference type="PANTHER" id="PTHR11076:SF33">
    <property type="entry name" value="DNA POLYMERASE KAPPA"/>
    <property type="match status" value="1"/>
</dbReference>
<dbReference type="PANTHER" id="PTHR11076">
    <property type="entry name" value="DNA REPAIR POLYMERASE UMUC / TRANSFERASE FAMILY MEMBER"/>
    <property type="match status" value="1"/>
</dbReference>
<dbReference type="Pfam" id="PF00817">
    <property type="entry name" value="IMS"/>
    <property type="match status" value="1"/>
</dbReference>
<dbReference type="Pfam" id="PF11799">
    <property type="entry name" value="IMS_C"/>
    <property type="match status" value="1"/>
</dbReference>
<dbReference type="Pfam" id="PF21999">
    <property type="entry name" value="IMS_HHH_1"/>
    <property type="match status" value="1"/>
</dbReference>
<dbReference type="SUPFAM" id="SSF56672">
    <property type="entry name" value="DNA/RNA polymerases"/>
    <property type="match status" value="1"/>
</dbReference>
<dbReference type="SUPFAM" id="SSF100879">
    <property type="entry name" value="Lesion bypass DNA polymerase (Y-family), little finger domain"/>
    <property type="match status" value="1"/>
</dbReference>
<dbReference type="PROSITE" id="PS50173">
    <property type="entry name" value="UMUC"/>
    <property type="match status" value="1"/>
</dbReference>
<comment type="function">
    <text evidence="1">Poorly processive, error-prone DNA polymerase involved in untargeted mutagenesis. Copies undamaged DNA at stalled replication forks, which arise in vivo from mismatched or misaligned primer ends. These misaligned primers can be extended by PolIV. Exhibits no 3'-5' exonuclease (proofreading) activity. May be involved in translesional synthesis, in conjunction with the beta clamp from PolIII.</text>
</comment>
<comment type="catalytic activity">
    <reaction evidence="1">
        <text>DNA(n) + a 2'-deoxyribonucleoside 5'-triphosphate = DNA(n+1) + diphosphate</text>
        <dbReference type="Rhea" id="RHEA:22508"/>
        <dbReference type="Rhea" id="RHEA-COMP:17339"/>
        <dbReference type="Rhea" id="RHEA-COMP:17340"/>
        <dbReference type="ChEBI" id="CHEBI:33019"/>
        <dbReference type="ChEBI" id="CHEBI:61560"/>
        <dbReference type="ChEBI" id="CHEBI:173112"/>
        <dbReference type="EC" id="2.7.7.7"/>
    </reaction>
</comment>
<comment type="cofactor">
    <cofactor evidence="1">
        <name>Mg(2+)</name>
        <dbReference type="ChEBI" id="CHEBI:18420"/>
    </cofactor>
    <text evidence="1">Binds 2 magnesium ions per subunit.</text>
</comment>
<comment type="subunit">
    <text evidence="1">Monomer.</text>
</comment>
<comment type="subcellular location">
    <subcellularLocation>
        <location evidence="1">Cytoplasm</location>
    </subcellularLocation>
</comment>
<comment type="similarity">
    <text evidence="1">Belongs to the DNA polymerase type-Y family.</text>
</comment>
<reference key="1">
    <citation type="journal article" date="2004" name="Proc. Natl. Acad. Sci. U.S.A.">
        <title>Genome sequence of the enterobacterial phytopathogen Erwinia carotovora subsp. atroseptica and characterization of virulence factors.</title>
        <authorList>
            <person name="Bell K.S."/>
            <person name="Sebaihia M."/>
            <person name="Pritchard L."/>
            <person name="Holden M.T.G."/>
            <person name="Hyman L.J."/>
            <person name="Holeva M.C."/>
            <person name="Thomson N.R."/>
            <person name="Bentley S.D."/>
            <person name="Churcher L.J.C."/>
            <person name="Mungall K."/>
            <person name="Atkin R."/>
            <person name="Bason N."/>
            <person name="Brooks K."/>
            <person name="Chillingworth T."/>
            <person name="Clark K."/>
            <person name="Doggett J."/>
            <person name="Fraser A."/>
            <person name="Hance Z."/>
            <person name="Hauser H."/>
            <person name="Jagels K."/>
            <person name="Moule S."/>
            <person name="Norbertczak H."/>
            <person name="Ormond D."/>
            <person name="Price C."/>
            <person name="Quail M.A."/>
            <person name="Sanders M."/>
            <person name="Walker D."/>
            <person name="Whitehead S."/>
            <person name="Salmond G.P.C."/>
            <person name="Birch P.R.J."/>
            <person name="Parkhill J."/>
            <person name="Toth I.K."/>
        </authorList>
    </citation>
    <scope>NUCLEOTIDE SEQUENCE [LARGE SCALE GENOMIC DNA]</scope>
    <source>
        <strain>SCRI 1043 / ATCC BAA-672</strain>
    </source>
</reference>
<proteinExistence type="inferred from homology"/>
<gene>
    <name evidence="1" type="primary">dinB</name>
    <name type="ordered locus">ECA3468</name>
</gene>
<feature type="chain" id="PRO_1000084896" description="DNA polymerase IV">
    <location>
        <begin position="1"/>
        <end position="352"/>
    </location>
</feature>
<feature type="domain" description="UmuC" evidence="1">
    <location>
        <begin position="4"/>
        <end position="185"/>
    </location>
</feature>
<feature type="active site" evidence="1">
    <location>
        <position position="104"/>
    </location>
</feature>
<feature type="binding site" evidence="1">
    <location>
        <position position="8"/>
    </location>
    <ligand>
        <name>Mg(2+)</name>
        <dbReference type="ChEBI" id="CHEBI:18420"/>
    </ligand>
</feature>
<feature type="binding site" evidence="1">
    <location>
        <position position="103"/>
    </location>
    <ligand>
        <name>Mg(2+)</name>
        <dbReference type="ChEBI" id="CHEBI:18420"/>
    </ligand>
</feature>
<feature type="site" description="Substrate discrimination" evidence="1">
    <location>
        <position position="13"/>
    </location>
</feature>
<evidence type="ECO:0000255" key="1">
    <source>
        <dbReference type="HAMAP-Rule" id="MF_01113"/>
    </source>
</evidence>
<name>DPO4_PECAS</name>
<sequence>MRKIIHVDMDCFYAAIEMRDNPRLRDIPLAIGGSADRRGVISTANYPARRYGVRSAMATATALRLCPHLTLLPGRMEVYKSTSRQIREIFSRYTSLIEPLSLDEAYLDVTDSPHCNGSATRIAEEIRRTIADELNLTASAGIAPIKFLAKVASELNKPNGQYVITPEQVDDFLLALPLEKIPGVGKVTAKRLEERGLHTCADVRVYALADLLKAFGKFGRVLWERCQGIDDRQISPDRQRKSVGVEKTLAQDIHNWDQCENLIEQLYQELEVRLKRVKPDLHIARQGVKLKFDDFQQTTQEHVWPMLNKQDLLKLAQQTWQERRKSRGVRLVGLHVTLLDPQIERQLVFDWG</sequence>